<name>CITE2_HUMAN</name>
<comment type="function">
    <text evidence="3 5 8">Transcriptional coactivator of the p300/CBP-mediated transcription complex. Acts as a bridge, linking TFAP2 transcription factors and the p300/CBP transcriptional coactivator complex in order to stimulate TFAP2-mediated transcriptional activation. Positively regulates TGF-beta signaling through its association with the SMAD/p300/CBP-mediated transcriptional coactivator complex. Stimulates the peroxisome proliferator-activated receptors PPARA transcriptional activity. Enhances estrogen-dependent transactivation mediated by estrogen receptors. Also acts as a transcriptional corepressor; interferes with the binding of the transcription factors HIF1A or STAT2 and the p300/CBP transcriptional coactivator complex. Participates in sex determination and early gonad development by stimulating transcription activation of SRY. Plays a role in controlling left-right patterning during embryogenesis; potentiates transcriptional activation of NODAL-mediated gene transcription in the left lateral plate mesoderm (LPM). Plays an essential role in differentiation of the adrenal cortex from the adrenogonadal primordium (AGP); stimulates WT1-mediated transcription activation thereby up-regulating the nuclear hormone receptor NR5A1 promoter activity. Associates with chromatin to the PITX2 P1 promoter region.</text>
</comment>
<comment type="subunit">
    <text evidence="1 4 5 6 7 8 11">Interacts (via C-terminus) with SMAD2. Interacts (via C-terminus) with SMAD3 (via MH2 domain). Interacts with LHX2 (via LIM domains). Interacts with WT1 (By similarity). Interacts (via C-terminus) with EP300 (via CH1 domain); the interaction is stimulated in response to hypoxia. Interacts with PPARA. Interacts (via C-terminus) with TFAP2A, TFAP2B and TFAP2C.</text>
</comment>
<comment type="interaction">
    <interactant intactId="EBI-937732">
        <id>Q99967</id>
    </interactant>
    <interactant intactId="EBI-447295">
        <id>Q09472</id>
        <label>EP300</label>
    </interactant>
    <organismsDiffer>false</organismsDiffer>
    <experiments>3</experiments>
</comment>
<comment type="interaction">
    <interactant intactId="EBI-937732">
        <id>Q99967</id>
    </interactant>
    <interactant intactId="EBI-747754">
        <id>P28799</id>
        <label>GRN</label>
    </interactant>
    <organismsDiffer>false</organismsDiffer>
    <experiments>3</experiments>
</comment>
<comment type="interaction">
    <interactant intactId="EBI-937732">
        <id>Q99967</id>
    </interactant>
    <interactant intactId="EBI-1049011">
        <id>P41235</id>
        <label>HNF4A</label>
    </interactant>
    <organismsDiffer>false</organismsDiffer>
    <experiments>3</experiments>
</comment>
<comment type="interaction">
    <interactant intactId="EBI-937732">
        <id>Q99967</id>
    </interactant>
    <interactant intactId="EBI-749195">
        <id>P60891</id>
        <label>PRPS1</label>
    </interactant>
    <organismsDiffer>false</organismsDiffer>
    <experiments>3</experiments>
</comment>
<comment type="interaction">
    <interactant intactId="EBI-937732">
        <id>Q99967</id>
    </interactant>
    <interactant intactId="EBI-937309">
        <id>Q92754</id>
        <label>TFAP2C</label>
    </interactant>
    <organismsDiffer>false</organismsDiffer>
    <experiments>2</experiments>
</comment>
<comment type="interaction">
    <interactant intactId="EBI-937732">
        <id>Q99967</id>
    </interactant>
    <interactant intactId="EBI-720609">
        <id>O76024</id>
        <label>WFS1</label>
    </interactant>
    <organismsDiffer>false</organismsDiffer>
    <experiments>3</experiments>
</comment>
<comment type="subcellular location">
    <subcellularLocation>
        <location evidence="5 10 11">Nucleus</location>
    </subcellularLocation>
    <text>Colocalizes with EP300 in dot-like structures.</text>
</comment>
<comment type="alternative products">
    <event type="alternative splicing"/>
    <isoform>
        <id>Q99967-1</id>
        <name>1</name>
        <sequence type="displayed"/>
    </isoform>
    <isoform>
        <id>Q99967-2</id>
        <name>2</name>
        <sequence type="described" ref="VSP_001089"/>
    </isoform>
</comment>
<comment type="induction">
    <text evidence="11">By hypoxia and deferoxamine.</text>
</comment>
<comment type="disease" evidence="9">
    <disease id="DI-03330">
        <name>Ventricular septal defect 2</name>
        <acronym>VSD2</acronym>
        <description>A common form of congenital cardiovascular anomaly that may occur alone or in combination with other cardiac malformations. It can affect any portion of the ventricular septum, resulting in abnormal communications between the two lower chambers of the heart. Classification is based on location of the communication, such as perimembranous, inlet, outlet (infundibular), central muscular, marginal muscular, or apical muscular defect. Large defects that go unrepaired may give rise to cardiac enlargement, congestive heart failure, pulmonary hypertension, Eisenmenger's syndrome, delayed fetal brain development, arrhythmias, and even sudden cardiac death.</description>
        <dbReference type="MIM" id="614431"/>
    </disease>
    <text>The disease is caused by variants affecting the gene represented in this entry.</text>
</comment>
<comment type="disease" evidence="9">
    <disease id="DI-03333">
        <name>Atrial septal defect 8</name>
        <acronym>ASD8</acronym>
        <description>A congenital heart malformation characterized by incomplete closure of the wall between the atria resulting in blood flow from the left to the right atria.</description>
        <dbReference type="MIM" id="614433"/>
    </disease>
    <text>The disease is caused by variants affecting the gene represented in this entry.</text>
</comment>
<comment type="similarity">
    <text evidence="13">Belongs to the CITED family.</text>
</comment>
<comment type="online information" name="Atlas of Genetics and Cytogenetics in Oncology and Haematology">
    <link uri="https://atlasgeneticsoncology.org/gene/40087/CITED2"/>
</comment>
<keyword id="KW-0002">3D-structure</keyword>
<keyword id="KW-0010">Activator</keyword>
<keyword id="KW-0025">Alternative splicing</keyword>
<keyword id="KW-0976">Atrial septal defect</keyword>
<keyword id="KW-0217">Developmental protein</keyword>
<keyword id="KW-0221">Differentiation</keyword>
<keyword id="KW-0225">Disease variant</keyword>
<keyword id="KW-0539">Nucleus</keyword>
<keyword id="KW-1267">Proteomics identification</keyword>
<keyword id="KW-1185">Reference proteome</keyword>
<keyword id="KW-0678">Repressor</keyword>
<keyword id="KW-0346">Stress response</keyword>
<keyword id="KW-0804">Transcription</keyword>
<keyword id="KW-0805">Transcription regulation</keyword>
<organism>
    <name type="scientific">Homo sapiens</name>
    <name type="common">Human</name>
    <dbReference type="NCBI Taxonomy" id="9606"/>
    <lineage>
        <taxon>Eukaryota</taxon>
        <taxon>Metazoa</taxon>
        <taxon>Chordata</taxon>
        <taxon>Craniata</taxon>
        <taxon>Vertebrata</taxon>
        <taxon>Euteleostomi</taxon>
        <taxon>Mammalia</taxon>
        <taxon>Eutheria</taxon>
        <taxon>Euarchontoglires</taxon>
        <taxon>Primates</taxon>
        <taxon>Haplorrhini</taxon>
        <taxon>Catarrhini</taxon>
        <taxon>Hominidae</taxon>
        <taxon>Homo</taxon>
    </lineage>
</organism>
<gene>
    <name type="primary">CITED2</name>
    <name type="synonym">MRG1</name>
</gene>
<dbReference type="EMBL" id="U65093">
    <property type="protein sequence ID" value="AAC51114.1"/>
    <property type="molecule type" value="mRNA"/>
</dbReference>
<dbReference type="EMBL" id="AF129290">
    <property type="protein sequence ID" value="AAF01263.1"/>
    <property type="molecule type" value="Genomic_DNA"/>
</dbReference>
<dbReference type="EMBL" id="AF129290">
    <property type="protein sequence ID" value="AAF01264.1"/>
    <property type="molecule type" value="Genomic_DNA"/>
</dbReference>
<dbReference type="EMBL" id="AF109161">
    <property type="protein sequence ID" value="AAD10055.1"/>
    <property type="molecule type" value="mRNA"/>
</dbReference>
<dbReference type="EMBL" id="AL592429">
    <property type="status" value="NOT_ANNOTATED_CDS"/>
    <property type="molecule type" value="Genomic_DNA"/>
</dbReference>
<dbReference type="EMBL" id="BC004377">
    <property type="protein sequence ID" value="AAH04377.1"/>
    <property type="molecule type" value="mRNA"/>
</dbReference>
<dbReference type="CCDS" id="CCDS5195.1">
    <molecule id="Q99967-1"/>
</dbReference>
<dbReference type="RefSeq" id="NP_001161860.1">
    <molecule id="Q99967-1"/>
    <property type="nucleotide sequence ID" value="NM_001168388.3"/>
</dbReference>
<dbReference type="RefSeq" id="NP_001161861.2">
    <property type="nucleotide sequence ID" value="NM_001168389.2"/>
</dbReference>
<dbReference type="RefSeq" id="NP_006070.2">
    <molecule id="Q99967-1"/>
    <property type="nucleotide sequence ID" value="NM_006079.4"/>
</dbReference>
<dbReference type="PDB" id="1P4Q">
    <property type="method" value="NMR"/>
    <property type="chains" value="A=216-259"/>
</dbReference>
<dbReference type="PDB" id="1R8U">
    <property type="method" value="NMR"/>
    <property type="chains" value="A=220-269"/>
</dbReference>
<dbReference type="PDB" id="7LVS">
    <property type="method" value="X-ray"/>
    <property type="resolution" value="2.02 A"/>
    <property type="chains" value="F=216-246"/>
</dbReference>
<dbReference type="PDB" id="7QGS">
    <property type="method" value="X-ray"/>
    <property type="resolution" value="2.00 A"/>
    <property type="chains" value="B=224-244"/>
</dbReference>
<dbReference type="PDBsum" id="1P4Q"/>
<dbReference type="PDBsum" id="1R8U"/>
<dbReference type="PDBsum" id="7LVS"/>
<dbReference type="PDBsum" id="7QGS"/>
<dbReference type="SMR" id="Q99967"/>
<dbReference type="BioGRID" id="115649">
    <property type="interactions" value="16"/>
</dbReference>
<dbReference type="FunCoup" id="Q99967">
    <property type="interactions" value="1588"/>
</dbReference>
<dbReference type="IntAct" id="Q99967">
    <property type="interactions" value="11"/>
</dbReference>
<dbReference type="MINT" id="Q99967"/>
<dbReference type="STRING" id="9606.ENSP00000444198"/>
<dbReference type="GlyGen" id="Q99967">
    <property type="glycosylation" value="2 sites"/>
</dbReference>
<dbReference type="iPTMnet" id="Q99967"/>
<dbReference type="PhosphoSitePlus" id="Q99967"/>
<dbReference type="BioMuta" id="CITED2"/>
<dbReference type="DMDM" id="21542403"/>
<dbReference type="jPOST" id="Q99967"/>
<dbReference type="MassIVE" id="Q99967"/>
<dbReference type="PaxDb" id="9606-ENSP00000444198"/>
<dbReference type="PeptideAtlas" id="Q99967"/>
<dbReference type="ProteomicsDB" id="78555">
    <molecule id="Q99967-1"/>
</dbReference>
<dbReference type="ProteomicsDB" id="78556">
    <molecule id="Q99967-2"/>
</dbReference>
<dbReference type="Pumba" id="Q99967"/>
<dbReference type="Antibodypedia" id="4252">
    <property type="antibodies" value="275 antibodies from 35 providers"/>
</dbReference>
<dbReference type="DNASU" id="10370"/>
<dbReference type="Ensembl" id="ENST00000367651.4">
    <molecule id="Q99967-1"/>
    <property type="protein sequence ID" value="ENSP00000356623.2"/>
    <property type="gene ID" value="ENSG00000164442.11"/>
</dbReference>
<dbReference type="Ensembl" id="ENST00000536159.2">
    <molecule id="Q99967-1"/>
    <property type="protein sequence ID" value="ENSP00000442831.1"/>
    <property type="gene ID" value="ENSG00000164442.11"/>
</dbReference>
<dbReference type="GeneID" id="10370"/>
<dbReference type="KEGG" id="hsa:10370"/>
<dbReference type="MANE-Select" id="ENST00000367651.4">
    <property type="protein sequence ID" value="ENSP00000356623.2"/>
    <property type="RefSeq nucleotide sequence ID" value="NM_006079.5"/>
    <property type="RefSeq protein sequence ID" value="NP_006070.2"/>
</dbReference>
<dbReference type="UCSC" id="uc003qip.3">
    <molecule id="Q99967-1"/>
    <property type="organism name" value="human"/>
</dbReference>
<dbReference type="AGR" id="HGNC:1987"/>
<dbReference type="CTD" id="10370"/>
<dbReference type="DisGeNET" id="10370"/>
<dbReference type="GeneCards" id="CITED2"/>
<dbReference type="HGNC" id="HGNC:1987">
    <property type="gene designation" value="CITED2"/>
</dbReference>
<dbReference type="HPA" id="ENSG00000164442">
    <property type="expression patterns" value="Low tissue specificity"/>
</dbReference>
<dbReference type="MalaCards" id="CITED2"/>
<dbReference type="MIM" id="602937">
    <property type="type" value="gene"/>
</dbReference>
<dbReference type="MIM" id="614431">
    <property type="type" value="phenotype"/>
</dbReference>
<dbReference type="MIM" id="614433">
    <property type="type" value="phenotype"/>
</dbReference>
<dbReference type="neXtProt" id="NX_Q99967"/>
<dbReference type="OpenTargets" id="ENSG00000164442"/>
<dbReference type="Orphanet" id="99103">
    <property type="disease" value="Atrial septal defect, ostium secundum type"/>
</dbReference>
<dbReference type="Orphanet" id="99105">
    <property type="disease" value="Atrial septal defect, sinus venosus type"/>
</dbReference>
<dbReference type="Orphanet" id="101063">
    <property type="disease" value="Situs inversus totalis"/>
</dbReference>
<dbReference type="Orphanet" id="3303">
    <property type="disease" value="Tetralogy of Fallot"/>
</dbReference>
<dbReference type="PharmGKB" id="PA26524"/>
<dbReference type="VEuPathDB" id="HostDB:ENSG00000164442"/>
<dbReference type="eggNOG" id="ENOG502QSRC">
    <property type="taxonomic scope" value="Eukaryota"/>
</dbReference>
<dbReference type="GeneTree" id="ENSGT00530000063624"/>
<dbReference type="HOGENOM" id="CLU_090678_0_0_1"/>
<dbReference type="InParanoid" id="Q99967"/>
<dbReference type="OMA" id="MSDHIHY"/>
<dbReference type="OrthoDB" id="10025072at2759"/>
<dbReference type="PAN-GO" id="Q99967">
    <property type="GO annotations" value="4 GO annotations based on evolutionary models"/>
</dbReference>
<dbReference type="PhylomeDB" id="Q99967"/>
<dbReference type="TreeFam" id="TF331915"/>
<dbReference type="PathwayCommons" id="Q99967"/>
<dbReference type="Reactome" id="R-HSA-1234158">
    <property type="pathway name" value="Regulation of gene expression by Hypoxia-inducible Factor"/>
</dbReference>
<dbReference type="Reactome" id="R-HSA-8866906">
    <property type="pathway name" value="TFAP2 (AP-2) family regulates transcription of other transcription factors"/>
</dbReference>
<dbReference type="Reactome" id="R-HSA-8866907">
    <property type="pathway name" value="Activation of the TFAP2 (AP-2) family of transcription factors"/>
</dbReference>
<dbReference type="Reactome" id="R-HSA-9614657">
    <property type="pathway name" value="FOXO-mediated transcription of cell death genes"/>
</dbReference>
<dbReference type="SignaLink" id="Q99967"/>
<dbReference type="SIGNOR" id="Q99967"/>
<dbReference type="BioGRID-ORCS" id="10370">
    <property type="hits" value="69 hits in 1155 CRISPR screens"/>
</dbReference>
<dbReference type="ChiTaRS" id="CITED2">
    <property type="organism name" value="human"/>
</dbReference>
<dbReference type="EvolutionaryTrace" id="Q99967"/>
<dbReference type="GeneWiki" id="CITED2"/>
<dbReference type="GenomeRNAi" id="10370"/>
<dbReference type="Pharos" id="Q99967">
    <property type="development level" value="Tbio"/>
</dbReference>
<dbReference type="PRO" id="PR:Q99967"/>
<dbReference type="Proteomes" id="UP000005640">
    <property type="component" value="Chromosome 6"/>
</dbReference>
<dbReference type="RNAct" id="Q99967">
    <property type="molecule type" value="protein"/>
</dbReference>
<dbReference type="Bgee" id="ENSG00000164442">
    <property type="expression patterns" value="Expressed in stromal cell of endometrium and 205 other cell types or tissues"/>
</dbReference>
<dbReference type="ExpressionAtlas" id="Q99967">
    <property type="expression patterns" value="baseline and differential"/>
</dbReference>
<dbReference type="GO" id="GO:0000785">
    <property type="term" value="C:chromatin"/>
    <property type="evidence" value="ECO:0000250"/>
    <property type="project" value="BHF-UCL"/>
</dbReference>
<dbReference type="GO" id="GO:0005737">
    <property type="term" value="C:cytoplasm"/>
    <property type="evidence" value="ECO:0000315"/>
    <property type="project" value="UniProtKB"/>
</dbReference>
<dbReference type="GO" id="GO:0005829">
    <property type="term" value="C:cytosol"/>
    <property type="evidence" value="ECO:0000314"/>
    <property type="project" value="HPA"/>
</dbReference>
<dbReference type="GO" id="GO:0043231">
    <property type="term" value="C:intracellular membrane-bounded organelle"/>
    <property type="evidence" value="ECO:0000314"/>
    <property type="project" value="HPA"/>
</dbReference>
<dbReference type="GO" id="GO:0005654">
    <property type="term" value="C:nucleoplasm"/>
    <property type="evidence" value="ECO:0000314"/>
    <property type="project" value="HPA"/>
</dbReference>
<dbReference type="GO" id="GO:0005634">
    <property type="term" value="C:nucleus"/>
    <property type="evidence" value="ECO:0000314"/>
    <property type="project" value="UniProtKB"/>
</dbReference>
<dbReference type="GO" id="GO:0032991">
    <property type="term" value="C:protein-containing complex"/>
    <property type="evidence" value="ECO:0000315"/>
    <property type="project" value="CAFA"/>
</dbReference>
<dbReference type="GO" id="GO:0003682">
    <property type="term" value="F:chromatin binding"/>
    <property type="evidence" value="ECO:0000250"/>
    <property type="project" value="UniProtKB"/>
</dbReference>
<dbReference type="GO" id="GO:0035035">
    <property type="term" value="F:histone acetyltransferase binding"/>
    <property type="evidence" value="ECO:0000314"/>
    <property type="project" value="BHF-UCL"/>
</dbReference>
<dbReference type="GO" id="GO:0050693">
    <property type="term" value="F:LBD domain binding"/>
    <property type="evidence" value="ECO:0000353"/>
    <property type="project" value="UniProtKB"/>
</dbReference>
<dbReference type="GO" id="GO:0140677">
    <property type="term" value="F:molecular function activator activity"/>
    <property type="evidence" value="ECO:0000269"/>
    <property type="project" value="DisProt"/>
</dbReference>
<dbReference type="GO" id="GO:0019904">
    <property type="term" value="F:protein domain specific binding"/>
    <property type="evidence" value="ECO:0000353"/>
    <property type="project" value="CAFA"/>
</dbReference>
<dbReference type="GO" id="GO:0061629">
    <property type="term" value="F:RNA polymerase II-specific DNA-binding transcription factor binding"/>
    <property type="evidence" value="ECO:0007669"/>
    <property type="project" value="Ensembl"/>
</dbReference>
<dbReference type="GO" id="GO:0046332">
    <property type="term" value="F:SMAD binding"/>
    <property type="evidence" value="ECO:0007669"/>
    <property type="project" value="Ensembl"/>
</dbReference>
<dbReference type="GO" id="GO:0003713">
    <property type="term" value="F:transcription coactivator activity"/>
    <property type="evidence" value="ECO:0000314"/>
    <property type="project" value="UniProtKB"/>
</dbReference>
<dbReference type="GO" id="GO:0003714">
    <property type="term" value="F:transcription corepressor activity"/>
    <property type="evidence" value="ECO:0000314"/>
    <property type="project" value="UniProtKB"/>
</dbReference>
<dbReference type="GO" id="GO:0035802">
    <property type="term" value="P:adrenal cortex formation"/>
    <property type="evidence" value="ECO:0000250"/>
    <property type="project" value="UniProtKB"/>
</dbReference>
<dbReference type="GO" id="GO:0060349">
    <property type="term" value="P:bone morphogenesis"/>
    <property type="evidence" value="ECO:0007669"/>
    <property type="project" value="Ensembl"/>
</dbReference>
<dbReference type="GO" id="GO:0061308">
    <property type="term" value="P:cardiac neural crest cell development involved in heart development"/>
    <property type="evidence" value="ECO:0007669"/>
    <property type="project" value="Ensembl"/>
</dbReference>
<dbReference type="GO" id="GO:0008283">
    <property type="term" value="P:cell population proliferation"/>
    <property type="evidence" value="ECO:0000314"/>
    <property type="project" value="UniProtKB"/>
</dbReference>
<dbReference type="GO" id="GO:0071456">
    <property type="term" value="P:cellular response to hypoxia"/>
    <property type="evidence" value="ECO:0000314"/>
    <property type="project" value="BHF-UCL"/>
</dbReference>
<dbReference type="GO" id="GO:0090398">
    <property type="term" value="P:cellular senescence"/>
    <property type="evidence" value="ECO:0007669"/>
    <property type="project" value="Ensembl"/>
</dbReference>
<dbReference type="GO" id="GO:0007417">
    <property type="term" value="P:central nervous system development"/>
    <property type="evidence" value="ECO:0007669"/>
    <property type="project" value="Ensembl"/>
</dbReference>
<dbReference type="GO" id="GO:0021602">
    <property type="term" value="P:cranial nerve morphogenesis"/>
    <property type="evidence" value="ECO:0007669"/>
    <property type="project" value="Ensembl"/>
</dbReference>
<dbReference type="GO" id="GO:0046697">
    <property type="term" value="P:decidualization"/>
    <property type="evidence" value="ECO:0007669"/>
    <property type="project" value="Ensembl"/>
</dbReference>
<dbReference type="GO" id="GO:0003140">
    <property type="term" value="P:determination of left/right asymmetry in lateral mesoderm"/>
    <property type="evidence" value="ECO:0000250"/>
    <property type="project" value="BHF-UCL"/>
</dbReference>
<dbReference type="GO" id="GO:0007368">
    <property type="term" value="P:determination of left/right symmetry"/>
    <property type="evidence" value="ECO:0000250"/>
    <property type="project" value="UniProtKB"/>
</dbReference>
<dbReference type="GO" id="GO:0048596">
    <property type="term" value="P:embryonic camera-type eye morphogenesis"/>
    <property type="evidence" value="ECO:0007669"/>
    <property type="project" value="Ensembl"/>
</dbReference>
<dbReference type="GO" id="GO:0060971">
    <property type="term" value="P:embryonic heart tube left/right pattern formation"/>
    <property type="evidence" value="ECO:0000250"/>
    <property type="project" value="BHF-UCL"/>
</dbReference>
<dbReference type="GO" id="GO:0001892">
    <property type="term" value="P:embryonic placenta development"/>
    <property type="evidence" value="ECO:0007669"/>
    <property type="project" value="Ensembl"/>
</dbReference>
<dbReference type="GO" id="GO:0060136">
    <property type="term" value="P:embryonic process involved in female pregnancy"/>
    <property type="evidence" value="ECO:0007669"/>
    <property type="project" value="Ensembl"/>
</dbReference>
<dbReference type="GO" id="GO:0003197">
    <property type="term" value="P:endocardial cushion development"/>
    <property type="evidence" value="ECO:0007669"/>
    <property type="project" value="Ensembl"/>
</dbReference>
<dbReference type="GO" id="GO:0048821">
    <property type="term" value="P:erythrocyte development"/>
    <property type="evidence" value="ECO:0007669"/>
    <property type="project" value="Ensembl"/>
</dbReference>
<dbReference type="GO" id="GO:0030851">
    <property type="term" value="P:granulocyte differentiation"/>
    <property type="evidence" value="ECO:0007669"/>
    <property type="project" value="Ensembl"/>
</dbReference>
<dbReference type="GO" id="GO:0007507">
    <property type="term" value="P:heart development"/>
    <property type="evidence" value="ECO:0000315"/>
    <property type="project" value="UniProtKB"/>
</dbReference>
<dbReference type="GO" id="GO:0001947">
    <property type="term" value="P:heart looping"/>
    <property type="evidence" value="ECO:0007669"/>
    <property type="project" value="Ensembl"/>
</dbReference>
<dbReference type="GO" id="GO:0002244">
    <property type="term" value="P:hematopoietic progenitor cell differentiation"/>
    <property type="evidence" value="ECO:0007669"/>
    <property type="project" value="Ensembl"/>
</dbReference>
<dbReference type="GO" id="GO:0070986">
    <property type="term" value="P:left/right axis specification"/>
    <property type="evidence" value="ECO:0000250"/>
    <property type="project" value="BHF-UCL"/>
</dbReference>
<dbReference type="GO" id="GO:0060972">
    <property type="term" value="P:left/right pattern formation"/>
    <property type="evidence" value="ECO:0000318"/>
    <property type="project" value="GO_Central"/>
</dbReference>
<dbReference type="GO" id="GO:0002089">
    <property type="term" value="P:lens morphogenesis in camera-type eye"/>
    <property type="evidence" value="ECO:0007669"/>
    <property type="project" value="Ensembl"/>
</dbReference>
<dbReference type="GO" id="GO:0001889">
    <property type="term" value="P:liver development"/>
    <property type="evidence" value="ECO:0000250"/>
    <property type="project" value="BHF-UCL"/>
</dbReference>
<dbReference type="GO" id="GO:0008584">
    <property type="term" value="P:male gonad development"/>
    <property type="evidence" value="ECO:0007669"/>
    <property type="project" value="Ensembl"/>
</dbReference>
<dbReference type="GO" id="GO:0043066">
    <property type="term" value="P:negative regulation of apoptotic process"/>
    <property type="evidence" value="ECO:0000250"/>
    <property type="project" value="BHF-UCL"/>
</dbReference>
<dbReference type="GO" id="GO:0030336">
    <property type="term" value="P:negative regulation of cell migration"/>
    <property type="evidence" value="ECO:0000315"/>
    <property type="project" value="BHF-UCL"/>
</dbReference>
<dbReference type="GO" id="GO:0045892">
    <property type="term" value="P:negative regulation of DNA-templated transcription"/>
    <property type="evidence" value="ECO:0000314"/>
    <property type="project" value="UniProtKB"/>
</dbReference>
<dbReference type="GO" id="GO:0010629">
    <property type="term" value="P:negative regulation of gene expression"/>
    <property type="evidence" value="ECO:0000314"/>
    <property type="project" value="UniProtKB"/>
</dbReference>
<dbReference type="GO" id="GO:0000122">
    <property type="term" value="P:negative regulation of transcription by RNA polymerase II"/>
    <property type="evidence" value="ECO:0000314"/>
    <property type="project" value="BHF-UCL"/>
</dbReference>
<dbReference type="GO" id="GO:0001843">
    <property type="term" value="P:neural tube closure"/>
    <property type="evidence" value="ECO:0007669"/>
    <property type="project" value="Ensembl"/>
</dbReference>
<dbReference type="GO" id="GO:0038092">
    <property type="term" value="P:nodal signaling pathway"/>
    <property type="evidence" value="ECO:0000250"/>
    <property type="project" value="BHF-UCL"/>
</dbReference>
<dbReference type="GO" id="GO:0003151">
    <property type="term" value="P:outflow tract morphogenesis"/>
    <property type="evidence" value="ECO:0000250"/>
    <property type="project" value="BHF-UCL"/>
</dbReference>
<dbReference type="GO" id="GO:0007422">
    <property type="term" value="P:peripheral nervous system development"/>
    <property type="evidence" value="ECO:0007669"/>
    <property type="project" value="Ensembl"/>
</dbReference>
<dbReference type="GO" id="GO:0045787">
    <property type="term" value="P:positive regulation of cell cycle"/>
    <property type="evidence" value="ECO:0000250"/>
    <property type="project" value="UniProtKB"/>
</dbReference>
<dbReference type="GO" id="GO:0022409">
    <property type="term" value="P:positive regulation of cell-cell adhesion"/>
    <property type="evidence" value="ECO:0000250"/>
    <property type="project" value="BHF-UCL"/>
</dbReference>
<dbReference type="GO" id="GO:0045893">
    <property type="term" value="P:positive regulation of DNA-templated transcription"/>
    <property type="evidence" value="ECO:0000314"/>
    <property type="project" value="UniProtKB"/>
</dbReference>
<dbReference type="GO" id="GO:0010628">
    <property type="term" value="P:positive regulation of gene expression"/>
    <property type="evidence" value="ECO:0000314"/>
    <property type="project" value="UniProtKB"/>
</dbReference>
<dbReference type="GO" id="GO:2000020">
    <property type="term" value="P:positive regulation of male gonad development"/>
    <property type="evidence" value="ECO:0000250"/>
    <property type="project" value="UniProtKB"/>
</dbReference>
<dbReference type="GO" id="GO:0035360">
    <property type="term" value="P:positive regulation of peroxisome proliferator activated receptor signaling pathway"/>
    <property type="evidence" value="ECO:0000314"/>
    <property type="project" value="UniProtKB"/>
</dbReference>
<dbReference type="GO" id="GO:0045944">
    <property type="term" value="P:positive regulation of transcription by RNA polymerase II"/>
    <property type="evidence" value="ECO:0000314"/>
    <property type="project" value="BHF-UCL"/>
</dbReference>
<dbReference type="GO" id="GO:0030511">
    <property type="term" value="P:positive regulation of transforming growth factor beta receptor signaling pathway"/>
    <property type="evidence" value="ECO:0000250"/>
    <property type="project" value="UniProtKB"/>
</dbReference>
<dbReference type="GO" id="GO:0061156">
    <property type="term" value="P:pulmonary artery morphogenesis"/>
    <property type="evidence" value="ECO:0007669"/>
    <property type="project" value="Ensembl"/>
</dbReference>
<dbReference type="GO" id="GO:0003156">
    <property type="term" value="P:regulation of animal organ formation"/>
    <property type="evidence" value="ECO:0000250"/>
    <property type="project" value="UniProtKB"/>
</dbReference>
<dbReference type="GO" id="GO:0043627">
    <property type="term" value="P:response to estrogen"/>
    <property type="evidence" value="ECO:0000314"/>
    <property type="project" value="UniProtKB"/>
</dbReference>
<dbReference type="GO" id="GO:0034405">
    <property type="term" value="P:response to fluid shear stress"/>
    <property type="evidence" value="ECO:0000315"/>
    <property type="project" value="BHF-UCL"/>
</dbReference>
<dbReference type="GO" id="GO:0001666">
    <property type="term" value="P:response to hypoxia"/>
    <property type="evidence" value="ECO:0000314"/>
    <property type="project" value="UniProtKB"/>
</dbReference>
<dbReference type="GO" id="GO:0009612">
    <property type="term" value="P:response to mechanical stimulus"/>
    <property type="evidence" value="ECO:0007669"/>
    <property type="project" value="Ensembl"/>
</dbReference>
<dbReference type="GO" id="GO:0007530">
    <property type="term" value="P:sex determination"/>
    <property type="evidence" value="ECO:0000250"/>
    <property type="project" value="UniProtKB"/>
</dbReference>
<dbReference type="GO" id="GO:0035914">
    <property type="term" value="P:skeletal muscle cell differentiation"/>
    <property type="evidence" value="ECO:0007669"/>
    <property type="project" value="Ensembl"/>
</dbReference>
<dbReference type="GO" id="GO:0048536">
    <property type="term" value="P:spleen development"/>
    <property type="evidence" value="ECO:0000250"/>
    <property type="project" value="BHF-UCL"/>
</dbReference>
<dbReference type="GO" id="GO:0048538">
    <property type="term" value="P:thymus development"/>
    <property type="evidence" value="ECO:0007669"/>
    <property type="project" value="Ensembl"/>
</dbReference>
<dbReference type="GO" id="GO:0007179">
    <property type="term" value="P:transforming growth factor beta receptor signaling pathway"/>
    <property type="evidence" value="ECO:0007669"/>
    <property type="project" value="Ensembl"/>
</dbReference>
<dbReference type="GO" id="GO:0001829">
    <property type="term" value="P:trophectodermal cell differentiation"/>
    <property type="evidence" value="ECO:0007669"/>
    <property type="project" value="Ensembl"/>
</dbReference>
<dbReference type="GO" id="GO:0060065">
    <property type="term" value="P:uterus development"/>
    <property type="evidence" value="ECO:0007669"/>
    <property type="project" value="Ensembl"/>
</dbReference>
<dbReference type="GO" id="GO:0001570">
    <property type="term" value="P:vasculogenesis"/>
    <property type="evidence" value="ECO:0007669"/>
    <property type="project" value="Ensembl"/>
</dbReference>
<dbReference type="GO" id="GO:0060412">
    <property type="term" value="P:ventricular septum morphogenesis"/>
    <property type="evidence" value="ECO:0000250"/>
    <property type="project" value="BHF-UCL"/>
</dbReference>
<dbReference type="DisProt" id="DP00356"/>
<dbReference type="FunFam" id="6.10.140.2200:FF:000001">
    <property type="entry name" value="Cbp/p300-interacting transactivator 2 isoform 1"/>
    <property type="match status" value="1"/>
</dbReference>
<dbReference type="Gene3D" id="6.10.140.2200">
    <property type="match status" value="1"/>
</dbReference>
<dbReference type="IDEAL" id="IID00179"/>
<dbReference type="InterPro" id="IPR007576">
    <property type="entry name" value="CITED"/>
</dbReference>
<dbReference type="PANTHER" id="PTHR17045:SF7">
    <property type="entry name" value="CBP_P300-INTERACTING TRANSACTIVATOR 2"/>
    <property type="match status" value="1"/>
</dbReference>
<dbReference type="PANTHER" id="PTHR17045">
    <property type="entry name" value="MELANOCYTE SPECIFIC GENE RELATED CITED"/>
    <property type="match status" value="1"/>
</dbReference>
<dbReference type="Pfam" id="PF04487">
    <property type="entry name" value="CITED"/>
    <property type="match status" value="1"/>
</dbReference>
<protein>
    <recommendedName>
        <fullName>Cbp/p300-interacting transactivator 2</fullName>
    </recommendedName>
    <alternativeName>
        <fullName>MSG-related protein 1</fullName>
        <shortName>MRG-1</shortName>
    </alternativeName>
    <alternativeName>
        <fullName>P35srj</fullName>
    </alternativeName>
</protein>
<reference key="1">
    <citation type="journal article" date="1996" name="Proc. Natl. Acad. Sci. U.S.A.">
        <title>msg1, a novel melanocyte-specific gene, encodes a nuclear protein and is associated with pigmentation.</title>
        <authorList>
            <person name="Shioda T."/>
            <person name="Fenner M.H."/>
            <person name="Isselbacher K.J."/>
        </authorList>
    </citation>
    <scope>NUCLEOTIDE SEQUENCE [MRNA] (ISOFORM 2)</scope>
    <scope>SUBCELLULAR LOCATION</scope>
</reference>
<reference key="2">
    <citation type="journal article" date="1999" name="Genomics">
        <title>Molecular cloning and chromosomal localization of the human CITED2 gene encoding p35srj/Mrg1.</title>
        <authorList>
            <person name="Leung M.K."/>
            <person name="Jones T."/>
            <person name="Michels C.L."/>
            <person name="Livingston D.M."/>
            <person name="Bhattacharya S."/>
        </authorList>
    </citation>
    <scope>NUCLEOTIDE SEQUENCE [GENOMIC DNA]</scope>
</reference>
<reference key="3">
    <citation type="journal article" date="1999" name="Genes Dev.">
        <title>Functional role of p35srj, a novel p300/CBP binding protein, during transactivation by HIF-1.</title>
        <authorList>
            <person name="Bhattacharya S."/>
            <person name="Michels C.M."/>
            <person name="Leung M.K."/>
            <person name="Arany Z.P."/>
            <person name="Kung A.L."/>
            <person name="Livingston D.M."/>
        </authorList>
    </citation>
    <scope>NUCLEOTIDE SEQUENCE [MRNA] (ISOFORM 1)</scope>
    <scope>INTERACTION WITH EP300</scope>
    <scope>INDUCTION</scope>
    <scope>SUBCELLULAR LOCATION</scope>
    <scope>TISSUE SPECIFICITY</scope>
</reference>
<reference key="4">
    <citation type="journal article" date="2003" name="Nature">
        <title>The DNA sequence and analysis of human chromosome 6.</title>
        <authorList>
            <person name="Mungall A.J."/>
            <person name="Palmer S.A."/>
            <person name="Sims S.K."/>
            <person name="Edwards C.A."/>
            <person name="Ashurst J.L."/>
            <person name="Wilming L."/>
            <person name="Jones M.C."/>
            <person name="Horton R."/>
            <person name="Hunt S.E."/>
            <person name="Scott C.E."/>
            <person name="Gilbert J.G.R."/>
            <person name="Clamp M.E."/>
            <person name="Bethel G."/>
            <person name="Milne S."/>
            <person name="Ainscough R."/>
            <person name="Almeida J.P."/>
            <person name="Ambrose K.D."/>
            <person name="Andrews T.D."/>
            <person name="Ashwell R.I.S."/>
            <person name="Babbage A.K."/>
            <person name="Bagguley C.L."/>
            <person name="Bailey J."/>
            <person name="Banerjee R."/>
            <person name="Barker D.J."/>
            <person name="Barlow K.F."/>
            <person name="Bates K."/>
            <person name="Beare D.M."/>
            <person name="Beasley H."/>
            <person name="Beasley O."/>
            <person name="Bird C.P."/>
            <person name="Blakey S.E."/>
            <person name="Bray-Allen S."/>
            <person name="Brook J."/>
            <person name="Brown A.J."/>
            <person name="Brown J.Y."/>
            <person name="Burford D.C."/>
            <person name="Burrill W."/>
            <person name="Burton J."/>
            <person name="Carder C."/>
            <person name="Carter N.P."/>
            <person name="Chapman J.C."/>
            <person name="Clark S.Y."/>
            <person name="Clark G."/>
            <person name="Clee C.M."/>
            <person name="Clegg S."/>
            <person name="Cobley V."/>
            <person name="Collier R.E."/>
            <person name="Collins J.E."/>
            <person name="Colman L.K."/>
            <person name="Corby N.R."/>
            <person name="Coville G.J."/>
            <person name="Culley K.M."/>
            <person name="Dhami P."/>
            <person name="Davies J."/>
            <person name="Dunn M."/>
            <person name="Earthrowl M.E."/>
            <person name="Ellington A.E."/>
            <person name="Evans K.A."/>
            <person name="Faulkner L."/>
            <person name="Francis M.D."/>
            <person name="Frankish A."/>
            <person name="Frankland J."/>
            <person name="French L."/>
            <person name="Garner P."/>
            <person name="Garnett J."/>
            <person name="Ghori M.J."/>
            <person name="Gilby L.M."/>
            <person name="Gillson C.J."/>
            <person name="Glithero R.J."/>
            <person name="Grafham D.V."/>
            <person name="Grant M."/>
            <person name="Gribble S."/>
            <person name="Griffiths C."/>
            <person name="Griffiths M.N.D."/>
            <person name="Hall R."/>
            <person name="Halls K.S."/>
            <person name="Hammond S."/>
            <person name="Harley J.L."/>
            <person name="Hart E.A."/>
            <person name="Heath P.D."/>
            <person name="Heathcott R."/>
            <person name="Holmes S.J."/>
            <person name="Howden P.J."/>
            <person name="Howe K.L."/>
            <person name="Howell G.R."/>
            <person name="Huckle E."/>
            <person name="Humphray S.J."/>
            <person name="Humphries M.D."/>
            <person name="Hunt A.R."/>
            <person name="Johnson C.M."/>
            <person name="Joy A.A."/>
            <person name="Kay M."/>
            <person name="Keenan S.J."/>
            <person name="Kimberley A.M."/>
            <person name="King A."/>
            <person name="Laird G.K."/>
            <person name="Langford C."/>
            <person name="Lawlor S."/>
            <person name="Leongamornlert D.A."/>
            <person name="Leversha M."/>
            <person name="Lloyd C.R."/>
            <person name="Lloyd D.M."/>
            <person name="Loveland J.E."/>
            <person name="Lovell J."/>
            <person name="Martin S."/>
            <person name="Mashreghi-Mohammadi M."/>
            <person name="Maslen G.L."/>
            <person name="Matthews L."/>
            <person name="McCann O.T."/>
            <person name="McLaren S.J."/>
            <person name="McLay K."/>
            <person name="McMurray A."/>
            <person name="Moore M.J.F."/>
            <person name="Mullikin J.C."/>
            <person name="Niblett D."/>
            <person name="Nickerson T."/>
            <person name="Novik K.L."/>
            <person name="Oliver K."/>
            <person name="Overton-Larty E.K."/>
            <person name="Parker A."/>
            <person name="Patel R."/>
            <person name="Pearce A.V."/>
            <person name="Peck A.I."/>
            <person name="Phillimore B.J.C.T."/>
            <person name="Phillips S."/>
            <person name="Plumb R.W."/>
            <person name="Porter K.M."/>
            <person name="Ramsey Y."/>
            <person name="Ranby S.A."/>
            <person name="Rice C.M."/>
            <person name="Ross M.T."/>
            <person name="Searle S.M."/>
            <person name="Sehra H.K."/>
            <person name="Sheridan E."/>
            <person name="Skuce C.D."/>
            <person name="Smith S."/>
            <person name="Smith M."/>
            <person name="Spraggon L."/>
            <person name="Squares S.L."/>
            <person name="Steward C.A."/>
            <person name="Sycamore N."/>
            <person name="Tamlyn-Hall G."/>
            <person name="Tester J."/>
            <person name="Theaker A.J."/>
            <person name="Thomas D.W."/>
            <person name="Thorpe A."/>
            <person name="Tracey A."/>
            <person name="Tromans A."/>
            <person name="Tubby B."/>
            <person name="Wall M."/>
            <person name="Wallis J.M."/>
            <person name="West A.P."/>
            <person name="White S.S."/>
            <person name="Whitehead S.L."/>
            <person name="Whittaker H."/>
            <person name="Wild A."/>
            <person name="Willey D.J."/>
            <person name="Wilmer T.E."/>
            <person name="Wood J.M."/>
            <person name="Wray P.W."/>
            <person name="Wyatt J.C."/>
            <person name="Young L."/>
            <person name="Younger R.M."/>
            <person name="Bentley D.R."/>
            <person name="Coulson A."/>
            <person name="Durbin R.M."/>
            <person name="Hubbard T."/>
            <person name="Sulston J.E."/>
            <person name="Dunham I."/>
            <person name="Rogers J."/>
            <person name="Beck S."/>
        </authorList>
    </citation>
    <scope>NUCLEOTIDE SEQUENCE [LARGE SCALE GENOMIC DNA]</scope>
</reference>
<reference key="5">
    <citation type="journal article" date="2004" name="Genome Res.">
        <title>The status, quality, and expansion of the NIH full-length cDNA project: the Mammalian Gene Collection (MGC).</title>
        <authorList>
            <consortium name="The MGC Project Team"/>
        </authorList>
    </citation>
    <scope>NUCLEOTIDE SEQUENCE [LARGE SCALE MRNA] (ISOFORM 1)</scope>
    <source>
        <tissue>Pancreas</tissue>
    </source>
</reference>
<reference key="6">
    <citation type="journal article" date="2001" name="Genes Dev.">
        <title>Selective coactivation of estrogen-dependent transcription by CITED1 CBP/p300-binding protein.</title>
        <authorList>
            <person name="Yahata T."/>
            <person name="Shao W."/>
            <person name="Endoh H."/>
            <person name="Hur J."/>
            <person name="Coser K.R."/>
            <person name="Sun H."/>
            <person name="Ueda Y."/>
            <person name="Kato S."/>
            <person name="Isselbacher K.J."/>
            <person name="Brown M."/>
            <person name="Shioda T."/>
        </authorList>
    </citation>
    <scope>FUNCTION</scope>
</reference>
<reference key="7">
    <citation type="journal article" date="2001" name="Nat. Genet.">
        <title>Cardiac malformations, adrenal agenesis, neural crest defects and exencephaly in mice lacking Cited2, a new Tfap2 co-activator.</title>
        <authorList>
            <person name="Bamforth S.D."/>
            <person name="Braganca J."/>
            <person name="Eloranta J.J."/>
            <person name="Murdoch J.N."/>
            <person name="Marques F.I."/>
            <person name="Kranc K.R."/>
            <person name="Farza H."/>
            <person name="Henderson D.J."/>
            <person name="Hurst H.C."/>
            <person name="Bhattacharya S."/>
        </authorList>
    </citation>
    <scope>INTERACTION WITH TFAP2A; TFAP2B AND TFAP2C</scope>
</reference>
<reference key="8">
    <citation type="journal article" date="2003" name="J. Biol. Chem.">
        <title>Physical and functional interactions among AP-2 transcription factors, p300/CREB-binding protein, and CITED2.</title>
        <authorList>
            <person name="Braganca J."/>
            <person name="Eloranta J.J."/>
            <person name="Bamforth S.D."/>
            <person name="Ibbitt J.C."/>
            <person name="Hurst H.C."/>
            <person name="Bhattacharya S."/>
        </authorList>
    </citation>
    <scope>FUNCTION</scope>
    <scope>SUBCELLULAR LOCATION</scope>
    <scope>INTERACTION WITH EP300; TFAP2A; TFAP2B AND TFAP2C</scope>
</reference>
<reference key="9">
    <citation type="journal article" date="2004" name="J. Biol. Chem.">
        <title>Identification of the CREB-binding protein/p300-interacting protein CITED2 as a peroxisome proliferator-activated receptor alpha coregulator.</title>
        <authorList>
            <person name="Tien E.S."/>
            <person name="Davis J.W."/>
            <person name="Vanden Heuvel J.P."/>
        </authorList>
    </citation>
    <scope>FUNCTION</scope>
    <scope>INTERACTION WITH PPARA</scope>
</reference>
<reference key="10">
    <citation type="journal article" date="2003" name="Nat. Struct. Biol.">
        <title>Structural basis for negative regulation of hypoxia-inducible factor-1alpha by CITED2.</title>
        <authorList>
            <person name="Freedman S.J."/>
            <person name="Sun Z.Y."/>
            <person name="Kung A.L."/>
            <person name="France D.S."/>
            <person name="Wagner G."/>
            <person name="Eck M.J."/>
        </authorList>
    </citation>
    <scope>STRUCTURE BY NMR OF 216-259 IN COMPLEX WITH 323-423 OF EP300 AND ZINC IONS</scope>
    <scope>INTERACTION WITH EP300</scope>
    <scope>MUTAGENESIS OF 243-LEU--LEU-246; LEU-243 AND LEU-246</scope>
</reference>
<reference key="11">
    <citation type="journal article" date="2004" name="J. Biol. Chem.">
        <title>Interaction of the TAZ1 domain of the CREB-binding protein with the activation domain of CITED2: regulation by competition between intrinsically unstructured ligands for non-identical binding sites.</title>
        <authorList>
            <person name="De Guzman R.N."/>
            <person name="Martinez-Yamout M.A."/>
            <person name="Dyson H.J."/>
            <person name="Wright P.E."/>
        </authorList>
    </citation>
    <scope>STRUCTURE BY NMR OF 220-269 IN COMPLEX WITH 340-439 OF CREBBP AND ZINC IONS</scope>
</reference>
<reference key="12">
    <citation type="journal article" date="2005" name="Hum. Mutat.">
        <title>Identification and functional analysis of CITED2 mutations in patients with congenital heart defects.</title>
        <authorList>
            <person name="Sperling S."/>
            <person name="Grimm C.H."/>
            <person name="Dunkel I."/>
            <person name="Mebus S."/>
            <person name="Sperling H.P."/>
            <person name="Ebner A."/>
            <person name="Galli R."/>
            <person name="Lehrach H."/>
            <person name="Fusch C."/>
            <person name="Berger F."/>
            <person name="Hammer S."/>
        </authorList>
    </citation>
    <scope>VARIANT VSD2 170-SER--GLY-178 DEL</scope>
    <scope>VARIANTS ASD8 GLY-GLY-SER-SER-THR-PRO-GLY-GLY-SER-179 INS AND 198-SER-GLY-199 DEL</scope>
    <scope>CHARACTERIZATION OF VARIANT VSD2 170-SER--GLY-178 DEL</scope>
    <scope>CHARACTERIZATION OF VARIANTS ASD8 GLY-GLY-SER-SER-THR-PRO-GLY-GLY-SER-179 INS AND 198-SER-GLY-199 DEL</scope>
</reference>
<accession>Q99967</accession>
<accession>O95426</accession>
<accession>Q5VTF4</accession>
<sequence length="270" mass="28497">MADHMMAMNHGRFPDGTNGLHHHPAHRMGMGQFPSPHHHQQQQPQHAFNALMGEHIHYGAGNMNATSGIRHAMGPGTVNGGHPPSALAPAARFNNSQFMGPPVASQGGSLPASMQLQKLNNQYFNHHPYPHNHYMPDLHPAAGHQMNGTNQHFRDCNPKHSGGSSTPGGSGGSSTPGGSGSSSGGGAGSSNSGGGSGSGNMPASVAHVPAAMLPPNVIDTDFIDEEVLMSLVIEMGLDRIKELPELWLGQNEFDFMTDFVCKQQPSRVSC</sequence>
<proteinExistence type="evidence at protein level"/>
<evidence type="ECO:0000250" key="1"/>
<evidence type="ECO:0000256" key="2">
    <source>
        <dbReference type="SAM" id="MobiDB-lite"/>
    </source>
</evidence>
<evidence type="ECO:0000269" key="3">
    <source>
    </source>
</evidence>
<evidence type="ECO:0000269" key="4">
    <source>
    </source>
</evidence>
<evidence type="ECO:0000269" key="5">
    <source>
    </source>
</evidence>
<evidence type="ECO:0000269" key="6">
    <source>
    </source>
</evidence>
<evidence type="ECO:0000269" key="7">
    <source>
    </source>
</evidence>
<evidence type="ECO:0000269" key="8">
    <source>
    </source>
</evidence>
<evidence type="ECO:0000269" key="9">
    <source>
    </source>
</evidence>
<evidence type="ECO:0000269" key="10">
    <source>
    </source>
</evidence>
<evidence type="ECO:0000269" key="11">
    <source>
    </source>
</evidence>
<evidence type="ECO:0000303" key="12">
    <source>
    </source>
</evidence>
<evidence type="ECO:0000305" key="13"/>
<evidence type="ECO:0007829" key="14">
    <source>
        <dbReference type="PDB" id="1P4Q"/>
    </source>
</evidence>
<evidence type="ECO:0007829" key="15">
    <source>
        <dbReference type="PDB" id="1R8U"/>
    </source>
</evidence>
<evidence type="ECO:0007829" key="16">
    <source>
        <dbReference type="PDB" id="7QGS"/>
    </source>
</evidence>
<feature type="chain" id="PRO_0000144726" description="Cbp/p300-interacting transactivator 2">
    <location>
        <begin position="1"/>
        <end position="270"/>
    </location>
</feature>
<feature type="region of interest" description="Disordered" evidence="2">
    <location>
        <begin position="138"/>
        <end position="201"/>
    </location>
</feature>
<feature type="compositionally biased region" description="Gly residues" evidence="2">
    <location>
        <begin position="165"/>
        <end position="198"/>
    </location>
</feature>
<feature type="splice variant" id="VSP_001089" description="In isoform 2." evidence="12">
    <location>
        <begin position="159"/>
        <end position="215"/>
    </location>
</feature>
<feature type="sequence variant" id="VAR_067583" description="In VSD2; reduces coactivation of the TFAP2C gene to 50% of that obtained with wild-type and represses HIF1A with about 60% efficiency compared to wild-type." evidence="9">
    <location>
        <begin position="170"/>
        <end position="178"/>
    </location>
</feature>
<feature type="sequence variant" id="VAR_067584" description="In ASD8; demonstrates only about 75% of the repressive activity of wild-type.">
    <original>S</original>
    <variation>GGSSTPGGS</variation>
    <location>
        <position position="179"/>
    </location>
</feature>
<feature type="sequence variant" id="VAR_067585" description="In ASD8; demonstrates only about 75% of the repressive activity of wild-type." evidence="9">
    <location>
        <begin position="198"/>
        <end position="199"/>
    </location>
</feature>
<feature type="mutagenesis site" description="Inhibits transactivation activity." evidence="6">
    <location>
        <begin position="243"/>
        <end position="246"/>
    </location>
</feature>
<feature type="mutagenesis site" description="Inhibits transactivation activity; when associated with E-246." evidence="6">
    <original>L</original>
    <variation>E</variation>
    <location>
        <position position="243"/>
    </location>
</feature>
<feature type="mutagenesis site" description="Inhibits transactivation activity; when associated with E-243." evidence="6">
    <original>L</original>
    <variation>E</variation>
    <location>
        <position position="246"/>
    </location>
</feature>
<feature type="strand" evidence="14">
    <location>
        <begin position="221"/>
        <end position="223"/>
    </location>
</feature>
<feature type="helix" evidence="16">
    <location>
        <begin position="225"/>
        <end position="234"/>
    </location>
</feature>
<feature type="turn" evidence="16">
    <location>
        <begin position="235"/>
        <end position="238"/>
    </location>
</feature>
<feature type="helix" evidence="15">
    <location>
        <begin position="251"/>
        <end position="253"/>
    </location>
</feature>
<feature type="helix" evidence="14">
    <location>
        <begin position="254"/>
        <end position="256"/>
    </location>
</feature>
<feature type="helix" evidence="15">
    <location>
        <begin position="266"/>
        <end position="268"/>
    </location>
</feature>